<sequence length="113" mass="12117">MHEMSLAEGVLQLVEDTARRESASRVKLVVLEIGRLSSVEPEAIKFCFEAVTHGSIAQGAALEIIAVPGAGWCMQCAETVPMTELYGACPTCGSHQVQPTGGTEMRVKEIEIE</sequence>
<feature type="chain" id="PRO_1000023824" description="Hydrogenase maturation factor HypA">
    <location>
        <begin position="1"/>
        <end position="113"/>
    </location>
</feature>
<feature type="binding site" evidence="1">
    <location>
        <position position="2"/>
    </location>
    <ligand>
        <name>Ni(2+)</name>
        <dbReference type="ChEBI" id="CHEBI:49786"/>
    </ligand>
</feature>
<feature type="binding site" evidence="1">
    <location>
        <position position="73"/>
    </location>
    <ligand>
        <name>Zn(2+)</name>
        <dbReference type="ChEBI" id="CHEBI:29105"/>
    </ligand>
</feature>
<feature type="binding site" evidence="1">
    <location>
        <position position="76"/>
    </location>
    <ligand>
        <name>Zn(2+)</name>
        <dbReference type="ChEBI" id="CHEBI:29105"/>
    </ligand>
</feature>
<feature type="binding site" evidence="1">
    <location>
        <position position="89"/>
    </location>
    <ligand>
        <name>Zn(2+)</name>
        <dbReference type="ChEBI" id="CHEBI:29105"/>
    </ligand>
</feature>
<feature type="binding site" evidence="1">
    <location>
        <position position="92"/>
    </location>
    <ligand>
        <name>Zn(2+)</name>
        <dbReference type="ChEBI" id="CHEBI:29105"/>
    </ligand>
</feature>
<name>HYPA_DECAR</name>
<accession>Q478M5</accession>
<reference key="1">
    <citation type="journal article" date="2009" name="BMC Genomics">
        <title>Metabolic analysis of the soil microbe Dechloromonas aromatica str. RCB: indications of a surprisingly complex life-style and cryptic anaerobic pathways for aromatic degradation.</title>
        <authorList>
            <person name="Salinero K.K."/>
            <person name="Keller K."/>
            <person name="Feil W.S."/>
            <person name="Feil H."/>
            <person name="Trong S."/>
            <person name="Di Bartolo G."/>
            <person name="Lapidus A."/>
        </authorList>
    </citation>
    <scope>NUCLEOTIDE SEQUENCE [LARGE SCALE GENOMIC DNA]</scope>
    <source>
        <strain>RCB</strain>
    </source>
</reference>
<gene>
    <name evidence="1" type="primary">hypA</name>
    <name type="ordered locus">Daro_3979</name>
</gene>
<comment type="function">
    <text evidence="1">Involved in the maturation of [NiFe] hydrogenases. Required for nickel insertion into the metal center of the hydrogenase.</text>
</comment>
<comment type="similarity">
    <text evidence="1">Belongs to the HypA/HybF family.</text>
</comment>
<protein>
    <recommendedName>
        <fullName evidence="1">Hydrogenase maturation factor HypA</fullName>
    </recommendedName>
</protein>
<evidence type="ECO:0000255" key="1">
    <source>
        <dbReference type="HAMAP-Rule" id="MF_00213"/>
    </source>
</evidence>
<dbReference type="EMBL" id="CP000089">
    <property type="protein sequence ID" value="AAZ48706.1"/>
    <property type="molecule type" value="Genomic_DNA"/>
</dbReference>
<dbReference type="SMR" id="Q478M5"/>
<dbReference type="STRING" id="159087.Daro_3979"/>
<dbReference type="KEGG" id="dar:Daro_3979"/>
<dbReference type="eggNOG" id="COG0375">
    <property type="taxonomic scope" value="Bacteria"/>
</dbReference>
<dbReference type="HOGENOM" id="CLU_126929_0_0_4"/>
<dbReference type="OrthoDB" id="288014at2"/>
<dbReference type="GO" id="GO:0016151">
    <property type="term" value="F:nickel cation binding"/>
    <property type="evidence" value="ECO:0007669"/>
    <property type="project" value="UniProtKB-UniRule"/>
</dbReference>
<dbReference type="GO" id="GO:0008270">
    <property type="term" value="F:zinc ion binding"/>
    <property type="evidence" value="ECO:0007669"/>
    <property type="project" value="UniProtKB-UniRule"/>
</dbReference>
<dbReference type="GO" id="GO:0051604">
    <property type="term" value="P:protein maturation"/>
    <property type="evidence" value="ECO:0007669"/>
    <property type="project" value="InterPro"/>
</dbReference>
<dbReference type="GO" id="GO:0036211">
    <property type="term" value="P:protein modification process"/>
    <property type="evidence" value="ECO:0007669"/>
    <property type="project" value="UniProtKB-UniRule"/>
</dbReference>
<dbReference type="FunFam" id="3.30.2320.80:FF:000001">
    <property type="entry name" value="Hydrogenase maturation factor HypA"/>
    <property type="match status" value="1"/>
</dbReference>
<dbReference type="Gene3D" id="3.30.2320.80">
    <property type="match status" value="1"/>
</dbReference>
<dbReference type="HAMAP" id="MF_00213">
    <property type="entry name" value="HypA_HybF"/>
    <property type="match status" value="1"/>
</dbReference>
<dbReference type="InterPro" id="IPR020538">
    <property type="entry name" value="Hydgase_Ni_incorp_HypA/HybF_CS"/>
</dbReference>
<dbReference type="InterPro" id="IPR000688">
    <property type="entry name" value="HypA/HybF"/>
</dbReference>
<dbReference type="NCBIfam" id="TIGR00100">
    <property type="entry name" value="hypA"/>
    <property type="match status" value="1"/>
</dbReference>
<dbReference type="PANTHER" id="PTHR34535">
    <property type="entry name" value="HYDROGENASE MATURATION FACTOR HYPA"/>
    <property type="match status" value="1"/>
</dbReference>
<dbReference type="PANTHER" id="PTHR34535:SF3">
    <property type="entry name" value="HYDROGENASE MATURATION FACTOR HYPA"/>
    <property type="match status" value="1"/>
</dbReference>
<dbReference type="Pfam" id="PF01155">
    <property type="entry name" value="HypA"/>
    <property type="match status" value="1"/>
</dbReference>
<dbReference type="PIRSF" id="PIRSF004761">
    <property type="entry name" value="Hydrgn_mat_HypA"/>
    <property type="match status" value="1"/>
</dbReference>
<dbReference type="PROSITE" id="PS01249">
    <property type="entry name" value="HYPA"/>
    <property type="match status" value="1"/>
</dbReference>
<proteinExistence type="inferred from homology"/>
<organism>
    <name type="scientific">Dechloromonas aromatica (strain RCB)</name>
    <dbReference type="NCBI Taxonomy" id="159087"/>
    <lineage>
        <taxon>Bacteria</taxon>
        <taxon>Pseudomonadati</taxon>
        <taxon>Pseudomonadota</taxon>
        <taxon>Betaproteobacteria</taxon>
        <taxon>Rhodocyclales</taxon>
        <taxon>Azonexaceae</taxon>
        <taxon>Dechloromonas</taxon>
    </lineage>
</organism>
<keyword id="KW-0479">Metal-binding</keyword>
<keyword id="KW-0533">Nickel</keyword>
<keyword id="KW-0862">Zinc</keyword>